<feature type="chain" id="PRO_0000228006" description="Transcription factor CP2-like protein 1">
    <location>
        <begin position="1"/>
        <end position="479"/>
    </location>
</feature>
<feature type="domain" description="Grh/CP2 DB" evidence="2 8">
    <location>
        <begin position="43"/>
        <end position="280"/>
    </location>
</feature>
<feature type="region of interest" description="Disordered" evidence="3">
    <location>
        <begin position="219"/>
        <end position="245"/>
    </location>
</feature>
<feature type="region of interest" description="SAM2-like domain" evidence="8">
    <location>
        <begin position="261"/>
        <end position="365"/>
    </location>
</feature>
<feature type="region of interest" description="Disordered" evidence="3">
    <location>
        <begin position="271"/>
        <end position="301"/>
    </location>
</feature>
<feature type="compositionally biased region" description="Basic and acidic residues" evidence="3">
    <location>
        <begin position="221"/>
        <end position="245"/>
    </location>
</feature>
<feature type="compositionally biased region" description="Polar residues" evidence="3">
    <location>
        <begin position="271"/>
        <end position="281"/>
    </location>
</feature>
<feature type="mutagenesis site" description="Impairs the formation of oligomeric homo-complexes in solution." evidence="6">
    <original>D</original>
    <variation>G</variation>
    <location>
        <position position="345"/>
    </location>
</feature>
<proteinExistence type="evidence at protein level"/>
<dbReference type="EMBL" id="AF198488">
    <property type="protein sequence ID" value="AAF32275.1"/>
    <property type="molecule type" value="mRNA"/>
</dbReference>
<dbReference type="EMBL" id="AC013399">
    <property type="protein sequence ID" value="AAX88871.1"/>
    <property type="molecule type" value="Genomic_DNA"/>
</dbReference>
<dbReference type="EMBL" id="AC079988">
    <property type="status" value="NOT_ANNOTATED_CDS"/>
    <property type="molecule type" value="Genomic_DNA"/>
</dbReference>
<dbReference type="EMBL" id="BC064698">
    <property type="protein sequence ID" value="AAH64698.1"/>
    <property type="molecule type" value="mRNA"/>
</dbReference>
<dbReference type="CCDS" id="CCDS2134.1"/>
<dbReference type="RefSeq" id="NP_055368.1">
    <property type="nucleotide sequence ID" value="NM_014553.3"/>
</dbReference>
<dbReference type="SMR" id="Q9NZI6"/>
<dbReference type="BioGRID" id="118929">
    <property type="interactions" value="8"/>
</dbReference>
<dbReference type="FunCoup" id="Q9NZI6">
    <property type="interactions" value="641"/>
</dbReference>
<dbReference type="IntAct" id="Q9NZI6">
    <property type="interactions" value="4"/>
</dbReference>
<dbReference type="STRING" id="9606.ENSP00000263707"/>
<dbReference type="iPTMnet" id="Q9NZI6"/>
<dbReference type="PhosphoSitePlus" id="Q9NZI6"/>
<dbReference type="BioMuta" id="TFCP2L1"/>
<dbReference type="DMDM" id="74734729"/>
<dbReference type="jPOST" id="Q9NZI6"/>
<dbReference type="MassIVE" id="Q9NZI6"/>
<dbReference type="PaxDb" id="9606-ENSP00000263707"/>
<dbReference type="PeptideAtlas" id="Q9NZI6"/>
<dbReference type="ProteomicsDB" id="83407"/>
<dbReference type="Antibodypedia" id="18370">
    <property type="antibodies" value="276 antibodies from 34 providers"/>
</dbReference>
<dbReference type="DNASU" id="29842"/>
<dbReference type="Ensembl" id="ENST00000263707.6">
    <property type="protein sequence ID" value="ENSP00000263707.5"/>
    <property type="gene ID" value="ENSG00000115112.8"/>
</dbReference>
<dbReference type="GeneID" id="29842"/>
<dbReference type="KEGG" id="hsa:29842"/>
<dbReference type="MANE-Select" id="ENST00000263707.6">
    <property type="protein sequence ID" value="ENSP00000263707.5"/>
    <property type="RefSeq nucleotide sequence ID" value="NM_014553.3"/>
    <property type="RefSeq protein sequence ID" value="NP_055368.1"/>
</dbReference>
<dbReference type="UCSC" id="uc002tmx.4">
    <property type="organism name" value="human"/>
</dbReference>
<dbReference type="AGR" id="HGNC:17925"/>
<dbReference type="CTD" id="29842"/>
<dbReference type="DisGeNET" id="29842"/>
<dbReference type="GeneCards" id="TFCP2L1"/>
<dbReference type="HGNC" id="HGNC:17925">
    <property type="gene designation" value="TFCP2L1"/>
</dbReference>
<dbReference type="HPA" id="ENSG00000115112">
    <property type="expression patterns" value="Tissue enhanced (kidney, salivary gland)"/>
</dbReference>
<dbReference type="MIM" id="609785">
    <property type="type" value="gene"/>
</dbReference>
<dbReference type="neXtProt" id="NX_Q9NZI6"/>
<dbReference type="OpenTargets" id="ENSG00000115112"/>
<dbReference type="PharmGKB" id="PA134980544"/>
<dbReference type="VEuPathDB" id="HostDB:ENSG00000115112"/>
<dbReference type="eggNOG" id="KOG4091">
    <property type="taxonomic scope" value="Eukaryota"/>
</dbReference>
<dbReference type="GeneTree" id="ENSGT00940000159158"/>
<dbReference type="HOGENOM" id="CLU_015127_2_0_1"/>
<dbReference type="InParanoid" id="Q9NZI6"/>
<dbReference type="OMA" id="QDESCFT"/>
<dbReference type="OrthoDB" id="9996779at2759"/>
<dbReference type="PAN-GO" id="Q9NZI6">
    <property type="GO annotations" value="4 GO annotations based on evolutionary models"/>
</dbReference>
<dbReference type="PhylomeDB" id="Q9NZI6"/>
<dbReference type="TreeFam" id="TF314132"/>
<dbReference type="PathwayCommons" id="Q9NZI6"/>
<dbReference type="SignaLink" id="Q9NZI6"/>
<dbReference type="BioGRID-ORCS" id="29842">
    <property type="hits" value="15 hits in 1172 CRISPR screens"/>
</dbReference>
<dbReference type="ChiTaRS" id="TFCP2L1">
    <property type="organism name" value="human"/>
</dbReference>
<dbReference type="GenomeRNAi" id="29842"/>
<dbReference type="Pharos" id="Q9NZI6">
    <property type="development level" value="Tbio"/>
</dbReference>
<dbReference type="PRO" id="PR:Q9NZI6"/>
<dbReference type="Proteomes" id="UP000005640">
    <property type="component" value="Chromosome 2"/>
</dbReference>
<dbReference type="RNAct" id="Q9NZI6">
    <property type="molecule type" value="protein"/>
</dbReference>
<dbReference type="Bgee" id="ENSG00000115112">
    <property type="expression patterns" value="Expressed in parotid gland and 156 other cell types or tissues"/>
</dbReference>
<dbReference type="GO" id="GO:0000785">
    <property type="term" value="C:chromatin"/>
    <property type="evidence" value="ECO:0000247"/>
    <property type="project" value="NTNU_SB"/>
</dbReference>
<dbReference type="GO" id="GO:0005737">
    <property type="term" value="C:cytoplasm"/>
    <property type="evidence" value="ECO:0007669"/>
    <property type="project" value="Ensembl"/>
</dbReference>
<dbReference type="GO" id="GO:0016020">
    <property type="term" value="C:membrane"/>
    <property type="evidence" value="ECO:0007669"/>
    <property type="project" value="Ensembl"/>
</dbReference>
<dbReference type="GO" id="GO:0005634">
    <property type="term" value="C:nucleus"/>
    <property type="evidence" value="ECO:0000318"/>
    <property type="project" value="GO_Central"/>
</dbReference>
<dbReference type="GO" id="GO:0001228">
    <property type="term" value="F:DNA-binding transcription activator activity, RNA polymerase II-specific"/>
    <property type="evidence" value="ECO:0000318"/>
    <property type="project" value="GO_Central"/>
</dbReference>
<dbReference type="GO" id="GO:0000981">
    <property type="term" value="F:DNA-binding transcription factor activity, RNA polymerase II-specific"/>
    <property type="evidence" value="ECO:0000247"/>
    <property type="project" value="NTNU_SB"/>
</dbReference>
<dbReference type="GO" id="GO:0000978">
    <property type="term" value="F:RNA polymerase II cis-regulatory region sequence-specific DNA binding"/>
    <property type="evidence" value="ECO:0000314"/>
    <property type="project" value="GO_Central"/>
</dbReference>
<dbReference type="GO" id="GO:1990837">
    <property type="term" value="F:sequence-specific double-stranded DNA binding"/>
    <property type="evidence" value="ECO:0000314"/>
    <property type="project" value="ARUK-UCL"/>
</dbReference>
<dbReference type="GO" id="GO:0000902">
    <property type="term" value="P:cell morphogenesis"/>
    <property type="evidence" value="ECO:0007669"/>
    <property type="project" value="Ensembl"/>
</dbReference>
<dbReference type="GO" id="GO:0007028">
    <property type="term" value="P:cytoplasm organization"/>
    <property type="evidence" value="ECO:0007669"/>
    <property type="project" value="Ensembl"/>
</dbReference>
<dbReference type="GO" id="GO:0008340">
    <property type="term" value="P:determination of adult lifespan"/>
    <property type="evidence" value="ECO:0007669"/>
    <property type="project" value="Ensembl"/>
</dbReference>
<dbReference type="GO" id="GO:0002070">
    <property type="term" value="P:epithelial cell maturation"/>
    <property type="evidence" value="ECO:0007669"/>
    <property type="project" value="Ensembl"/>
</dbReference>
<dbReference type="GO" id="GO:0000122">
    <property type="term" value="P:negative regulation of transcription by RNA polymerase II"/>
    <property type="evidence" value="ECO:0007669"/>
    <property type="project" value="Ensembl"/>
</dbReference>
<dbReference type="GO" id="GO:0045927">
    <property type="term" value="P:positive regulation of growth"/>
    <property type="evidence" value="ECO:0007669"/>
    <property type="project" value="Ensembl"/>
</dbReference>
<dbReference type="GO" id="GO:0006357">
    <property type="term" value="P:regulation of transcription by RNA polymerase II"/>
    <property type="evidence" value="ECO:0000314"/>
    <property type="project" value="GO_Central"/>
</dbReference>
<dbReference type="GO" id="GO:0007431">
    <property type="term" value="P:salivary gland development"/>
    <property type="evidence" value="ECO:0007669"/>
    <property type="project" value="Ensembl"/>
</dbReference>
<dbReference type="CDD" id="cd09590">
    <property type="entry name" value="SAM_LBP9"/>
    <property type="match status" value="1"/>
</dbReference>
<dbReference type="FunFam" id="1.10.150.50:FF:000022">
    <property type="entry name" value="Transcription factor CP2 like 1"/>
    <property type="match status" value="1"/>
</dbReference>
<dbReference type="Gene3D" id="1.10.150.50">
    <property type="entry name" value="Transcription Factor, Ets-1"/>
    <property type="match status" value="1"/>
</dbReference>
<dbReference type="InterPro" id="IPR007604">
    <property type="entry name" value="CP2"/>
</dbReference>
<dbReference type="InterPro" id="IPR013761">
    <property type="entry name" value="SAM/pointed_sf"/>
</dbReference>
<dbReference type="InterPro" id="IPR041418">
    <property type="entry name" value="SAM_3"/>
</dbReference>
<dbReference type="InterPro" id="IPR040167">
    <property type="entry name" value="TF_CP2-like"/>
</dbReference>
<dbReference type="InterPro" id="IPR037598">
    <property type="entry name" value="TFCP2L1_SAM"/>
</dbReference>
<dbReference type="PANTHER" id="PTHR11037">
    <property type="entry name" value="TRANSCRIPTION FACTOR CP2"/>
    <property type="match status" value="1"/>
</dbReference>
<dbReference type="PANTHER" id="PTHR11037:SF18">
    <property type="entry name" value="TRANSCRIPTION FACTOR CP2-LIKE PROTEIN 1"/>
    <property type="match status" value="1"/>
</dbReference>
<dbReference type="Pfam" id="PF04516">
    <property type="entry name" value="CP2"/>
    <property type="match status" value="1"/>
</dbReference>
<dbReference type="Pfam" id="PF25416">
    <property type="entry name" value="GRHL1_C"/>
    <property type="match status" value="1"/>
</dbReference>
<dbReference type="Pfam" id="PF18016">
    <property type="entry name" value="SAM_3"/>
    <property type="match status" value="1"/>
</dbReference>
<dbReference type="SUPFAM" id="SSF47769">
    <property type="entry name" value="SAM/Pointed domain"/>
    <property type="match status" value="1"/>
</dbReference>
<dbReference type="PROSITE" id="PS51968">
    <property type="entry name" value="GRH_CP2_DB"/>
    <property type="match status" value="1"/>
</dbReference>
<organism>
    <name type="scientific">Homo sapiens</name>
    <name type="common">Human</name>
    <dbReference type="NCBI Taxonomy" id="9606"/>
    <lineage>
        <taxon>Eukaryota</taxon>
        <taxon>Metazoa</taxon>
        <taxon>Chordata</taxon>
        <taxon>Craniata</taxon>
        <taxon>Vertebrata</taxon>
        <taxon>Euteleostomi</taxon>
        <taxon>Mammalia</taxon>
        <taxon>Eutheria</taxon>
        <taxon>Euarchontoglires</taxon>
        <taxon>Primates</taxon>
        <taxon>Haplorrhini</taxon>
        <taxon>Catarrhini</taxon>
        <taxon>Hominidae</taxon>
        <taxon>Homo</taxon>
    </lineage>
</organism>
<gene>
    <name type="primary">TFCP2L1</name>
    <name type="synonym">CRTR1</name>
    <name type="synonym">LBP9</name>
</gene>
<comment type="function">
    <text evidence="1 4 5 6">Transcription factor that facilitates establishment and maintenance of pluripotency in embryonic stem cells (ESCs) (PubMed:25215486, PubMed:26906118). With KLF2, acts as the major effector of self-renewal that mediates induction of pluripotency downstream of LIF/STAT3 and Wnt/beta-catenin signaling (By similarity). Required for normal duct development in the salivary gland and kidney (By similarity). Coordinates the development of the kidney collecting ducts intercalated (IC) and principal (PC) cells, which regulate acid-base and salt-water homeostasis, respectively (By similarity). Regulates the expression of IC genes including subunits B1 and D2 of the V-ATPase complex, OXGR1, CA12, SLC4A1, AQP6 and IC-specific transcription factor FOXI1 (By similarity). Also regulates the expression of JAG1 and subsequent notch signaling in the collecting duct (By similarity). JAG1 initiates notch signaling in PCs but inhibits notch signaling in ICs (By similarity). Acts as a transcriptional suppressor that may suppress UBP1-mediated transcriptional activation (By similarity). Modulates the placental expression of CYP11A1 (PubMed:10644752).</text>
</comment>
<comment type="subunit">
    <text evidence="1 6">Forms homohexamers via its SAM-like domain (PubMed:26906118). Interacts with MTA1; which is indispensable for TFCP2l1-mediated self-renewal-promoting effect and endoderm-inhibiting action (By similarity).</text>
</comment>
<comment type="subcellular location">
    <subcellularLocation>
        <location evidence="4">Nucleus</location>
    </subcellularLocation>
</comment>
<comment type="tissue specificity">
    <text evidence="4">Highly expressed in placental JEG-3 cells and very low levels of expression in non-steroidogenic cells. No expression was seen in adrenal NCI-H295A cells or in adrenal tissue.</text>
</comment>
<comment type="domain">
    <text evidence="1 6">The Grh/CP2 DB domain is required for direct DNA-binding (PubMed:26906118). The Grh/CP2 DB domain is essential to maintain the undifferentiated state of embryonic stem cells (By similarity).</text>
</comment>
<comment type="domain">
    <text evidence="6">The SAM-like domain is required for homohexamerization (PubMed:26906118).</text>
</comment>
<comment type="similarity">
    <text evidence="7">Belongs to the grh/CP2 family. CP2 subfamily.</text>
</comment>
<sequence length="479" mass="54627">MLFWHTQPEHYNQHNSGSYLRDVLALPIFKQEEPQLSPENEARLPPLQYVLCAATSPAVKLHEETLTYLNQGQSYEIRLLENRKLGDFQDLNTKYVKSIIRVVFHDRRLQYTEHQQLEGWRWSRPGDRILDIDIPLSVGILDPRASPTQLNAVEFLWDPAKRASAFIQVHCISTEFTPRKHGGEKGVPFRVQIDTFKQNENGEYTEHLHSASCQIKVFKPKGADRKQKTDREKMEKRTAQEKEKYQPSYETTILTECSPWPDVAYQVNSAPSPSYNGSPNSFGLGEGNASPTHPVEALPVGSDHLLPSASIQDAQQWLHRNRFSQFCRLFASFSGADLLKMSRDDLVQICGPADGIRLFNAIKGRNVRPKMTIYVCQELEQNRVPLQQKRDGSGDSNLSVYHAIFLEELTTLELIEKIANLYSISPQHIHRVYRQGPTGIHVVVSNEMVQNFQDESCFVLSTIKAESNDGYHIILKCGL</sequence>
<reference key="1">
    <citation type="journal article" date="2000" name="J. Biol. Chem.">
        <title>Cloning of factors related to HIV-inducible LBP proteins that regulate steroidogenic factor-1-independent human placental transcription of the cholesterol side-chain cleavage enzyme, P450scc.</title>
        <authorList>
            <person name="Huang N."/>
            <person name="Miller W.L."/>
        </authorList>
    </citation>
    <scope>NUCLEOTIDE SEQUENCE [MRNA]</scope>
    <scope>FUNCTION</scope>
    <scope>SUBCELLULAR LOCATION</scope>
    <scope>TISSUE SPECIFICITY</scope>
    <source>
        <tissue>Placenta</tissue>
    </source>
</reference>
<reference key="2">
    <citation type="journal article" date="2005" name="Nature">
        <title>Generation and annotation of the DNA sequences of human chromosomes 2 and 4.</title>
        <authorList>
            <person name="Hillier L.W."/>
            <person name="Graves T.A."/>
            <person name="Fulton R.S."/>
            <person name="Fulton L.A."/>
            <person name="Pepin K.H."/>
            <person name="Minx P."/>
            <person name="Wagner-McPherson C."/>
            <person name="Layman D."/>
            <person name="Wylie K."/>
            <person name="Sekhon M."/>
            <person name="Becker M.C."/>
            <person name="Fewell G.A."/>
            <person name="Delehaunty K.D."/>
            <person name="Miner T.L."/>
            <person name="Nash W.E."/>
            <person name="Kremitzki C."/>
            <person name="Oddy L."/>
            <person name="Du H."/>
            <person name="Sun H."/>
            <person name="Bradshaw-Cordum H."/>
            <person name="Ali J."/>
            <person name="Carter J."/>
            <person name="Cordes M."/>
            <person name="Harris A."/>
            <person name="Isak A."/>
            <person name="van Brunt A."/>
            <person name="Nguyen C."/>
            <person name="Du F."/>
            <person name="Courtney L."/>
            <person name="Kalicki J."/>
            <person name="Ozersky P."/>
            <person name="Abbott S."/>
            <person name="Armstrong J."/>
            <person name="Belter E.A."/>
            <person name="Caruso L."/>
            <person name="Cedroni M."/>
            <person name="Cotton M."/>
            <person name="Davidson T."/>
            <person name="Desai A."/>
            <person name="Elliott G."/>
            <person name="Erb T."/>
            <person name="Fronick C."/>
            <person name="Gaige T."/>
            <person name="Haakenson W."/>
            <person name="Haglund K."/>
            <person name="Holmes A."/>
            <person name="Harkins R."/>
            <person name="Kim K."/>
            <person name="Kruchowski S.S."/>
            <person name="Strong C.M."/>
            <person name="Grewal N."/>
            <person name="Goyea E."/>
            <person name="Hou S."/>
            <person name="Levy A."/>
            <person name="Martinka S."/>
            <person name="Mead K."/>
            <person name="McLellan M.D."/>
            <person name="Meyer R."/>
            <person name="Randall-Maher J."/>
            <person name="Tomlinson C."/>
            <person name="Dauphin-Kohlberg S."/>
            <person name="Kozlowicz-Reilly A."/>
            <person name="Shah N."/>
            <person name="Swearengen-Shahid S."/>
            <person name="Snider J."/>
            <person name="Strong J.T."/>
            <person name="Thompson J."/>
            <person name="Yoakum M."/>
            <person name="Leonard S."/>
            <person name="Pearman C."/>
            <person name="Trani L."/>
            <person name="Radionenko M."/>
            <person name="Waligorski J.E."/>
            <person name="Wang C."/>
            <person name="Rock S.M."/>
            <person name="Tin-Wollam A.-M."/>
            <person name="Maupin R."/>
            <person name="Latreille P."/>
            <person name="Wendl M.C."/>
            <person name="Yang S.-P."/>
            <person name="Pohl C."/>
            <person name="Wallis J.W."/>
            <person name="Spieth J."/>
            <person name="Bieri T.A."/>
            <person name="Berkowicz N."/>
            <person name="Nelson J.O."/>
            <person name="Osborne J."/>
            <person name="Ding L."/>
            <person name="Meyer R."/>
            <person name="Sabo A."/>
            <person name="Shotland Y."/>
            <person name="Sinha P."/>
            <person name="Wohldmann P.E."/>
            <person name="Cook L.L."/>
            <person name="Hickenbotham M.T."/>
            <person name="Eldred J."/>
            <person name="Williams D."/>
            <person name="Jones T.A."/>
            <person name="She X."/>
            <person name="Ciccarelli F.D."/>
            <person name="Izaurralde E."/>
            <person name="Taylor J."/>
            <person name="Schmutz J."/>
            <person name="Myers R.M."/>
            <person name="Cox D.R."/>
            <person name="Huang X."/>
            <person name="McPherson J.D."/>
            <person name="Mardis E.R."/>
            <person name="Clifton S.W."/>
            <person name="Warren W.C."/>
            <person name="Chinwalla A.T."/>
            <person name="Eddy S.R."/>
            <person name="Marra M.A."/>
            <person name="Ovcharenko I."/>
            <person name="Furey T.S."/>
            <person name="Miller W."/>
            <person name="Eichler E.E."/>
            <person name="Bork P."/>
            <person name="Suyama M."/>
            <person name="Torrents D."/>
            <person name="Waterston R.H."/>
            <person name="Wilson R.K."/>
        </authorList>
    </citation>
    <scope>NUCLEOTIDE SEQUENCE [LARGE SCALE GENOMIC DNA]</scope>
</reference>
<reference key="3">
    <citation type="journal article" date="2004" name="Genome Res.">
        <title>The status, quality, and expansion of the NIH full-length cDNA project: the Mammalian Gene Collection (MGC).</title>
        <authorList>
            <consortium name="The MGC Project Team"/>
        </authorList>
    </citation>
    <scope>NUCLEOTIDE SEQUENCE [LARGE SCALE MRNA]</scope>
    <source>
        <tissue>Placenta</tissue>
    </source>
</reference>
<reference key="4">
    <citation type="journal article" date="2014" name="Cell">
        <title>Resetting transcription factor control circuitry toward ground-state pluripotency in human.</title>
        <authorList>
            <person name="Takashima Y."/>
            <person name="Guo G."/>
            <person name="Loos R."/>
            <person name="Nichols J."/>
            <person name="Ficz G."/>
            <person name="Krueger F."/>
            <person name="Oxley D."/>
            <person name="Santos F."/>
            <person name="Clarke J."/>
            <person name="Mansfield W."/>
            <person name="Reik W."/>
            <person name="Bertone P."/>
            <person name="Smith A."/>
        </authorList>
    </citation>
    <scope>FUNCTION</scope>
</reference>
<reference key="5">
    <citation type="journal article" date="2016" name="Appl. Biochem. Biotechnol.">
        <title>Functional analysis of CP2-like domain and SAM-like domain in TFCP2L1, novel pluripotency factor of embryonic stem cells.</title>
        <authorList>
            <person name="Kim C.M."/>
            <person name="Jang T.H."/>
            <person name="Park H.H."/>
        </authorList>
    </citation>
    <scope>FUNCTION</scope>
    <scope>DOMAIN</scope>
    <scope>SUBUNIT</scope>
    <scope>MUTAGENESIS OF ASP-345</scope>
</reference>
<protein>
    <recommendedName>
        <fullName>Transcription factor CP2-like protein 1</fullName>
    </recommendedName>
    <alternativeName>
        <fullName>CP2-related transcriptional repressor 1</fullName>
        <shortName>CRTR-1</shortName>
    </alternativeName>
    <alternativeName>
        <fullName>Transcription factor LBP-9</fullName>
    </alternativeName>
</protein>
<evidence type="ECO:0000250" key="1">
    <source>
        <dbReference type="UniProtKB" id="Q3UNW5"/>
    </source>
</evidence>
<evidence type="ECO:0000255" key="2">
    <source>
        <dbReference type="PROSITE-ProRule" id="PRU01313"/>
    </source>
</evidence>
<evidence type="ECO:0000256" key="3">
    <source>
        <dbReference type="SAM" id="MobiDB-lite"/>
    </source>
</evidence>
<evidence type="ECO:0000269" key="4">
    <source>
    </source>
</evidence>
<evidence type="ECO:0000269" key="5">
    <source>
    </source>
</evidence>
<evidence type="ECO:0000269" key="6">
    <source>
    </source>
</evidence>
<evidence type="ECO:0000305" key="7"/>
<evidence type="ECO:0000305" key="8">
    <source>
    </source>
</evidence>
<keyword id="KW-0238">DNA-binding</keyword>
<keyword id="KW-0539">Nucleus</keyword>
<keyword id="KW-1267">Proteomics identification</keyword>
<keyword id="KW-1185">Reference proteome</keyword>
<keyword id="KW-0804">Transcription</keyword>
<keyword id="KW-0805">Transcription regulation</keyword>
<accession>Q9NZI6</accession>
<accession>Q4ZG43</accession>
<name>TF2L1_HUMAN</name>